<feature type="chain" id="PRO_1000143639" description="NADH-quinone oxidoreductase subunit I">
    <location>
        <begin position="1"/>
        <end position="163"/>
    </location>
</feature>
<feature type="domain" description="4Fe-4S ferredoxin-type 1" evidence="1">
    <location>
        <begin position="54"/>
        <end position="84"/>
    </location>
</feature>
<feature type="domain" description="4Fe-4S ferredoxin-type 2" evidence="1">
    <location>
        <begin position="94"/>
        <end position="123"/>
    </location>
</feature>
<feature type="binding site" evidence="1">
    <location>
        <position position="64"/>
    </location>
    <ligand>
        <name>[4Fe-4S] cluster</name>
        <dbReference type="ChEBI" id="CHEBI:49883"/>
        <label>1</label>
    </ligand>
</feature>
<feature type="binding site" evidence="1">
    <location>
        <position position="67"/>
    </location>
    <ligand>
        <name>[4Fe-4S] cluster</name>
        <dbReference type="ChEBI" id="CHEBI:49883"/>
        <label>1</label>
    </ligand>
</feature>
<feature type="binding site" evidence="1">
    <location>
        <position position="70"/>
    </location>
    <ligand>
        <name>[4Fe-4S] cluster</name>
        <dbReference type="ChEBI" id="CHEBI:49883"/>
        <label>1</label>
    </ligand>
</feature>
<feature type="binding site" evidence="1">
    <location>
        <position position="74"/>
    </location>
    <ligand>
        <name>[4Fe-4S] cluster</name>
        <dbReference type="ChEBI" id="CHEBI:49883"/>
        <label>2</label>
    </ligand>
</feature>
<feature type="binding site" evidence="1">
    <location>
        <position position="103"/>
    </location>
    <ligand>
        <name>[4Fe-4S] cluster</name>
        <dbReference type="ChEBI" id="CHEBI:49883"/>
        <label>2</label>
    </ligand>
</feature>
<feature type="binding site" evidence="1">
    <location>
        <position position="106"/>
    </location>
    <ligand>
        <name>[4Fe-4S] cluster</name>
        <dbReference type="ChEBI" id="CHEBI:49883"/>
        <label>2</label>
    </ligand>
</feature>
<feature type="binding site" evidence="1">
    <location>
        <position position="109"/>
    </location>
    <ligand>
        <name>[4Fe-4S] cluster</name>
        <dbReference type="ChEBI" id="CHEBI:49883"/>
        <label>2</label>
    </ligand>
</feature>
<feature type="binding site" evidence="1">
    <location>
        <position position="113"/>
    </location>
    <ligand>
        <name>[4Fe-4S] cluster</name>
        <dbReference type="ChEBI" id="CHEBI:49883"/>
        <label>1</label>
    </ligand>
</feature>
<organism>
    <name type="scientific">Cupriavidus taiwanensis (strain DSM 17343 / BCRC 17206 / CCUG 44338 / CIP 107171 / LMG 19424 / R1)</name>
    <name type="common">Ralstonia taiwanensis (strain LMG 19424)</name>
    <dbReference type="NCBI Taxonomy" id="977880"/>
    <lineage>
        <taxon>Bacteria</taxon>
        <taxon>Pseudomonadati</taxon>
        <taxon>Pseudomonadota</taxon>
        <taxon>Betaproteobacteria</taxon>
        <taxon>Burkholderiales</taxon>
        <taxon>Burkholderiaceae</taxon>
        <taxon>Cupriavidus</taxon>
    </lineage>
</organism>
<proteinExistence type="inferred from homology"/>
<evidence type="ECO:0000255" key="1">
    <source>
        <dbReference type="HAMAP-Rule" id="MF_01351"/>
    </source>
</evidence>
<dbReference type="EC" id="7.1.1.-" evidence="1"/>
<dbReference type="EMBL" id="CU633749">
    <property type="protein sequence ID" value="CAQ69007.1"/>
    <property type="molecule type" value="Genomic_DNA"/>
</dbReference>
<dbReference type="RefSeq" id="WP_010809124.1">
    <property type="nucleotide sequence ID" value="NC_010528.1"/>
</dbReference>
<dbReference type="SMR" id="B3R3X5"/>
<dbReference type="GeneID" id="29762864"/>
<dbReference type="KEGG" id="cti:RALTA_A1042"/>
<dbReference type="eggNOG" id="COG1143">
    <property type="taxonomic scope" value="Bacteria"/>
</dbReference>
<dbReference type="HOGENOM" id="CLU_067218_5_1_4"/>
<dbReference type="BioCyc" id="CTAI977880:RALTA_RS04955-MONOMER"/>
<dbReference type="Proteomes" id="UP000001692">
    <property type="component" value="Chromosome 1"/>
</dbReference>
<dbReference type="GO" id="GO:0005886">
    <property type="term" value="C:plasma membrane"/>
    <property type="evidence" value="ECO:0007669"/>
    <property type="project" value="UniProtKB-SubCell"/>
</dbReference>
<dbReference type="GO" id="GO:0051539">
    <property type="term" value="F:4 iron, 4 sulfur cluster binding"/>
    <property type="evidence" value="ECO:0007669"/>
    <property type="project" value="UniProtKB-KW"/>
</dbReference>
<dbReference type="GO" id="GO:0005506">
    <property type="term" value="F:iron ion binding"/>
    <property type="evidence" value="ECO:0007669"/>
    <property type="project" value="UniProtKB-UniRule"/>
</dbReference>
<dbReference type="GO" id="GO:0050136">
    <property type="term" value="F:NADH:ubiquinone reductase (non-electrogenic) activity"/>
    <property type="evidence" value="ECO:0007669"/>
    <property type="project" value="UniProtKB-UniRule"/>
</dbReference>
<dbReference type="GO" id="GO:0048038">
    <property type="term" value="F:quinone binding"/>
    <property type="evidence" value="ECO:0007669"/>
    <property type="project" value="UniProtKB-KW"/>
</dbReference>
<dbReference type="GO" id="GO:0009060">
    <property type="term" value="P:aerobic respiration"/>
    <property type="evidence" value="ECO:0007669"/>
    <property type="project" value="TreeGrafter"/>
</dbReference>
<dbReference type="FunFam" id="3.30.70.3270:FF:000003">
    <property type="entry name" value="NADH-quinone oxidoreductase subunit I"/>
    <property type="match status" value="1"/>
</dbReference>
<dbReference type="Gene3D" id="3.30.70.3270">
    <property type="match status" value="1"/>
</dbReference>
<dbReference type="HAMAP" id="MF_01351">
    <property type="entry name" value="NDH1_NuoI"/>
    <property type="match status" value="1"/>
</dbReference>
<dbReference type="InterPro" id="IPR017896">
    <property type="entry name" value="4Fe4S_Fe-S-bd"/>
</dbReference>
<dbReference type="InterPro" id="IPR017900">
    <property type="entry name" value="4Fe4S_Fe_S_CS"/>
</dbReference>
<dbReference type="InterPro" id="IPR010226">
    <property type="entry name" value="NADH_quinone_OxRdtase_chainI"/>
</dbReference>
<dbReference type="NCBIfam" id="TIGR01971">
    <property type="entry name" value="NuoI"/>
    <property type="match status" value="1"/>
</dbReference>
<dbReference type="NCBIfam" id="NF004538">
    <property type="entry name" value="PRK05888.1-4"/>
    <property type="match status" value="1"/>
</dbReference>
<dbReference type="NCBIfam" id="NF004539">
    <property type="entry name" value="PRK05888.1-5"/>
    <property type="match status" value="1"/>
</dbReference>
<dbReference type="PANTHER" id="PTHR10849:SF20">
    <property type="entry name" value="NADH DEHYDROGENASE [UBIQUINONE] IRON-SULFUR PROTEIN 8, MITOCHONDRIAL"/>
    <property type="match status" value="1"/>
</dbReference>
<dbReference type="PANTHER" id="PTHR10849">
    <property type="entry name" value="NADH DEHYDROGENASE UBIQUINONE IRON-SULFUR PROTEIN 8, MITOCHONDRIAL"/>
    <property type="match status" value="1"/>
</dbReference>
<dbReference type="Pfam" id="PF12838">
    <property type="entry name" value="Fer4_7"/>
    <property type="match status" value="1"/>
</dbReference>
<dbReference type="SUPFAM" id="SSF54862">
    <property type="entry name" value="4Fe-4S ferredoxins"/>
    <property type="match status" value="1"/>
</dbReference>
<dbReference type="PROSITE" id="PS00198">
    <property type="entry name" value="4FE4S_FER_1"/>
    <property type="match status" value="2"/>
</dbReference>
<dbReference type="PROSITE" id="PS51379">
    <property type="entry name" value="4FE4S_FER_2"/>
    <property type="match status" value="2"/>
</dbReference>
<comment type="function">
    <text evidence="1">NDH-1 shuttles electrons from NADH, via FMN and iron-sulfur (Fe-S) centers, to quinones in the respiratory chain. The immediate electron acceptor for the enzyme in this species is believed to be ubiquinone. Couples the redox reaction to proton translocation (for every two electrons transferred, four hydrogen ions are translocated across the cytoplasmic membrane), and thus conserves the redox energy in a proton gradient.</text>
</comment>
<comment type="catalytic activity">
    <reaction evidence="1">
        <text>a quinone + NADH + 5 H(+)(in) = a quinol + NAD(+) + 4 H(+)(out)</text>
        <dbReference type="Rhea" id="RHEA:57888"/>
        <dbReference type="ChEBI" id="CHEBI:15378"/>
        <dbReference type="ChEBI" id="CHEBI:24646"/>
        <dbReference type="ChEBI" id="CHEBI:57540"/>
        <dbReference type="ChEBI" id="CHEBI:57945"/>
        <dbReference type="ChEBI" id="CHEBI:132124"/>
    </reaction>
</comment>
<comment type="cofactor">
    <cofactor evidence="1">
        <name>[4Fe-4S] cluster</name>
        <dbReference type="ChEBI" id="CHEBI:49883"/>
    </cofactor>
    <text evidence="1">Binds 2 [4Fe-4S] clusters per subunit.</text>
</comment>
<comment type="subunit">
    <text evidence="1">NDH-1 is composed of 14 different subunits. Subunits NuoA, H, J, K, L, M, N constitute the membrane sector of the complex.</text>
</comment>
<comment type="subcellular location">
    <subcellularLocation>
        <location evidence="1">Cell inner membrane</location>
        <topology evidence="1">Peripheral membrane protein</topology>
    </subcellularLocation>
</comment>
<comment type="similarity">
    <text evidence="1">Belongs to the complex I 23 kDa subunit family.</text>
</comment>
<protein>
    <recommendedName>
        <fullName evidence="1">NADH-quinone oxidoreductase subunit I</fullName>
        <ecNumber evidence="1">7.1.1.-</ecNumber>
    </recommendedName>
    <alternativeName>
        <fullName evidence="1">NADH dehydrogenase I subunit I</fullName>
    </alternativeName>
    <alternativeName>
        <fullName evidence="1">NDH-1 subunit I</fullName>
    </alternativeName>
</protein>
<sequence length="163" mass="18497">MLLAIKDFFNSLLLKELFKGMALTGRYLFARKITVQFPEEKTPISPRFRGLHALRRYPNGEERCIACKLCEAVCPALAITIESDARADGTRRTTRYDIDLTKCIFCGFCEEACPVDAIVETQILEYHGEKRGDLYFTKDMLLAVGDRYEPQIAAAKAADAKYR</sequence>
<keyword id="KW-0004">4Fe-4S</keyword>
<keyword id="KW-0997">Cell inner membrane</keyword>
<keyword id="KW-1003">Cell membrane</keyword>
<keyword id="KW-0408">Iron</keyword>
<keyword id="KW-0411">Iron-sulfur</keyword>
<keyword id="KW-0472">Membrane</keyword>
<keyword id="KW-0479">Metal-binding</keyword>
<keyword id="KW-0520">NAD</keyword>
<keyword id="KW-0874">Quinone</keyword>
<keyword id="KW-0677">Repeat</keyword>
<keyword id="KW-1278">Translocase</keyword>
<keyword id="KW-0830">Ubiquinone</keyword>
<name>NUOI_CUPTR</name>
<gene>
    <name evidence="1" type="primary">nuoI</name>
    <name type="ordered locus">RALTA_A1042</name>
</gene>
<reference key="1">
    <citation type="journal article" date="2008" name="Genome Res.">
        <title>Genome sequence of the beta-rhizobium Cupriavidus taiwanensis and comparative genomics of rhizobia.</title>
        <authorList>
            <person name="Amadou C."/>
            <person name="Pascal G."/>
            <person name="Mangenot S."/>
            <person name="Glew M."/>
            <person name="Bontemps C."/>
            <person name="Capela D."/>
            <person name="Carrere S."/>
            <person name="Cruveiller S."/>
            <person name="Dossat C."/>
            <person name="Lajus A."/>
            <person name="Marchetti M."/>
            <person name="Poinsot V."/>
            <person name="Rouy Z."/>
            <person name="Servin B."/>
            <person name="Saad M."/>
            <person name="Schenowitz C."/>
            <person name="Barbe V."/>
            <person name="Batut J."/>
            <person name="Medigue C."/>
            <person name="Masson-Boivin C."/>
        </authorList>
    </citation>
    <scope>NUCLEOTIDE SEQUENCE [LARGE SCALE GENOMIC DNA]</scope>
    <source>
        <strain>DSM 17343 / BCRC 17206 / CCUG 44338 / CIP 107171 / LMG 19424 / R1</strain>
    </source>
</reference>
<accession>B3R3X5</accession>